<proteinExistence type="inferred from homology"/>
<dbReference type="EMBL" id="AM040264">
    <property type="protein sequence ID" value="CAJ11287.1"/>
    <property type="molecule type" value="Genomic_DNA"/>
</dbReference>
<dbReference type="RefSeq" id="WP_002966865.1">
    <property type="nucleotide sequence ID" value="NZ_KN046823.1"/>
</dbReference>
<dbReference type="SMR" id="Q2YQK2"/>
<dbReference type="STRING" id="359391.BAB1_1331"/>
<dbReference type="KEGG" id="bmf:BAB1_1331"/>
<dbReference type="PATRIC" id="fig|359391.11.peg.781"/>
<dbReference type="HOGENOM" id="CLU_019250_2_2_5"/>
<dbReference type="PhylomeDB" id="Q2YQK2"/>
<dbReference type="UniPathway" id="UPA00148"/>
<dbReference type="Proteomes" id="UP000002719">
    <property type="component" value="Chromosome I"/>
</dbReference>
<dbReference type="GO" id="GO:0015420">
    <property type="term" value="F:ABC-type vitamin B12 transporter activity"/>
    <property type="evidence" value="ECO:0007669"/>
    <property type="project" value="UniProtKB-UniRule"/>
</dbReference>
<dbReference type="GO" id="GO:0003824">
    <property type="term" value="F:catalytic activity"/>
    <property type="evidence" value="ECO:0007669"/>
    <property type="project" value="InterPro"/>
</dbReference>
<dbReference type="GO" id="GO:0009236">
    <property type="term" value="P:cobalamin biosynthetic process"/>
    <property type="evidence" value="ECO:0007669"/>
    <property type="project" value="UniProtKB-UniRule"/>
</dbReference>
<dbReference type="CDD" id="cd05389">
    <property type="entry name" value="CobQ_N"/>
    <property type="match status" value="1"/>
</dbReference>
<dbReference type="CDD" id="cd01750">
    <property type="entry name" value="GATase1_CobQ"/>
    <property type="match status" value="1"/>
</dbReference>
<dbReference type="Gene3D" id="3.40.50.880">
    <property type="match status" value="1"/>
</dbReference>
<dbReference type="Gene3D" id="3.40.50.300">
    <property type="entry name" value="P-loop containing nucleotide triphosphate hydrolases"/>
    <property type="match status" value="1"/>
</dbReference>
<dbReference type="HAMAP" id="MF_00028">
    <property type="entry name" value="CobQ"/>
    <property type="match status" value="1"/>
</dbReference>
<dbReference type="InterPro" id="IPR029062">
    <property type="entry name" value="Class_I_gatase-like"/>
</dbReference>
<dbReference type="InterPro" id="IPR002586">
    <property type="entry name" value="CobQ/CobB/MinD/ParA_Nub-bd_dom"/>
</dbReference>
<dbReference type="InterPro" id="IPR033949">
    <property type="entry name" value="CobQ_GATase1"/>
</dbReference>
<dbReference type="InterPro" id="IPR047045">
    <property type="entry name" value="CobQ_N"/>
</dbReference>
<dbReference type="InterPro" id="IPR004459">
    <property type="entry name" value="CobQ_synth"/>
</dbReference>
<dbReference type="InterPro" id="IPR011698">
    <property type="entry name" value="GATase_3"/>
</dbReference>
<dbReference type="InterPro" id="IPR027417">
    <property type="entry name" value="P-loop_NTPase"/>
</dbReference>
<dbReference type="NCBIfam" id="TIGR00313">
    <property type="entry name" value="cobQ"/>
    <property type="match status" value="1"/>
</dbReference>
<dbReference type="NCBIfam" id="NF001989">
    <property type="entry name" value="PRK00784.1"/>
    <property type="match status" value="1"/>
</dbReference>
<dbReference type="PANTHER" id="PTHR21343:SF1">
    <property type="entry name" value="COBYRIC ACID SYNTHASE"/>
    <property type="match status" value="1"/>
</dbReference>
<dbReference type="PANTHER" id="PTHR21343">
    <property type="entry name" value="DETHIOBIOTIN SYNTHETASE"/>
    <property type="match status" value="1"/>
</dbReference>
<dbReference type="Pfam" id="PF01656">
    <property type="entry name" value="CbiA"/>
    <property type="match status" value="1"/>
</dbReference>
<dbReference type="Pfam" id="PF07685">
    <property type="entry name" value="GATase_3"/>
    <property type="match status" value="1"/>
</dbReference>
<dbReference type="SUPFAM" id="SSF52317">
    <property type="entry name" value="Class I glutamine amidotransferase-like"/>
    <property type="match status" value="1"/>
</dbReference>
<dbReference type="SUPFAM" id="SSF52540">
    <property type="entry name" value="P-loop containing nucleoside triphosphate hydrolases"/>
    <property type="match status" value="1"/>
</dbReference>
<dbReference type="PROSITE" id="PS51274">
    <property type="entry name" value="GATASE_COBBQ"/>
    <property type="match status" value="1"/>
</dbReference>
<gene>
    <name evidence="1" type="primary">cobQ</name>
    <name type="ordered locus">BAB1_1331</name>
</gene>
<evidence type="ECO:0000255" key="1">
    <source>
        <dbReference type="HAMAP-Rule" id="MF_00028"/>
    </source>
</evidence>
<feature type="chain" id="PRO_1000002348" description="Cobyric acid synthase">
    <location>
        <begin position="1"/>
        <end position="483"/>
    </location>
</feature>
<feature type="domain" description="GATase cobBQ-type" evidence="1">
    <location>
        <begin position="251"/>
        <end position="438"/>
    </location>
</feature>
<feature type="active site" description="Nucleophile" evidence="1">
    <location>
        <position position="333"/>
    </location>
</feature>
<feature type="active site" evidence="1">
    <location>
        <position position="430"/>
    </location>
</feature>
<keyword id="KW-0169">Cobalamin biosynthesis</keyword>
<keyword id="KW-0315">Glutamine amidotransferase</keyword>
<keyword id="KW-1185">Reference proteome</keyword>
<accession>Q2YQK2</accession>
<sequence>MARAIMFQGTGSDVGKSVLVAGLCRVARNRGLKVRPFKPQNMSNNAAVSDDGGEIGRAQWLQALACGVPSSVHMNPVLLKPQTDMGSQLIVQGQVRGEARGRYYQELKPQLMAAVMESFAKVGDGADLVLVEGAGSPAEINLRAGDIANMGFATHADVPVVLVGDIDRGGVIASLVGTHTILPQEDRAMVRGFLINKFRGDISLFDDGLAAITRFTGWRSFGVVPWLKAVSRLPAEDSVVLERAVRGDKKALIVAVPMLPRIANFDDLDPLKAEPAVEVVMVPPGSSLPADAGLVVLPGTKSTIADLLALRENGWDRELVAHVKRGGHVLGICGGFQMLGRRISDPAGIEGNVRDIEGLGLLDIETMTEPEKVVRNVEAVSLLHDEPLEGYEIHIGRTSGPDMARPFARIGDHDDGAVSPDGRIMGTYLHGIFSADRFRHHFLRALGVEGGQMNYRESVEEALGELAEGLEASLDIDGLFALA</sequence>
<reference key="1">
    <citation type="journal article" date="2005" name="Infect. Immun.">
        <title>Whole-genome analyses of speciation events in pathogenic Brucellae.</title>
        <authorList>
            <person name="Chain P.S."/>
            <person name="Comerci D.J."/>
            <person name="Tolmasky M.E."/>
            <person name="Larimer F.W."/>
            <person name="Malfatti S.A."/>
            <person name="Vergez L.M."/>
            <person name="Aguero F."/>
            <person name="Land M.L."/>
            <person name="Ugalde R.A."/>
            <person name="Garcia E."/>
        </authorList>
    </citation>
    <scope>NUCLEOTIDE SEQUENCE [LARGE SCALE GENOMIC DNA]</scope>
    <source>
        <strain>2308</strain>
    </source>
</reference>
<protein>
    <recommendedName>
        <fullName evidence="1">Cobyric acid synthase</fullName>
    </recommendedName>
</protein>
<name>COBQ_BRUA2</name>
<organism>
    <name type="scientific">Brucella abortus (strain 2308)</name>
    <dbReference type="NCBI Taxonomy" id="359391"/>
    <lineage>
        <taxon>Bacteria</taxon>
        <taxon>Pseudomonadati</taxon>
        <taxon>Pseudomonadota</taxon>
        <taxon>Alphaproteobacteria</taxon>
        <taxon>Hyphomicrobiales</taxon>
        <taxon>Brucellaceae</taxon>
        <taxon>Brucella/Ochrobactrum group</taxon>
        <taxon>Brucella</taxon>
    </lineage>
</organism>
<comment type="function">
    <text evidence="1">Catalyzes amidations at positions B, D, E, and G on adenosylcobyrinic A,C-diamide. NH(2) groups are provided by glutamine, and one molecule of ATP is hydrogenolyzed for each amidation.</text>
</comment>
<comment type="pathway">
    <text evidence="1">Cofactor biosynthesis; adenosylcobalamin biosynthesis.</text>
</comment>
<comment type="similarity">
    <text evidence="1">Belongs to the CobB/CobQ family. CobQ subfamily.</text>
</comment>